<accession>A2A791</accession>
<accession>Q3UFQ2</accession>
<accession>Q6ZQB9</accession>
<accession>Q80X47</accession>
<accession>Q8K1H5</accession>
<sequence length="1549" mass="172438">MAEREVETGPRKRFEQKSDAVFDEIVENCGVMDTEMSEDTDHNLTPTLASMSYGMPNQTGSENSLLDEDDYFLNSGDLAGIPVVSSDNEDEQDCSSKDNLVSSVHTDGSLEVERRAAHQESDNENEIQIQNQLKKDFPKQFDQVSVFKSIRKDFCLVRENSKETFSGKEKNRDLTYHEREKRLDKPHKGLDSRLKSSFFDKAANQVEETLHTHLPQNPETNFRDSSYPFASKESIGSELGNSFASNIRIKEEPLDDEYDRAVAPQQGLLDRVKDEPDNAQEYSHGQQQKTQEGELKISAVFSVSGSPLAPQLTTGFQPSLASPGMNKMLPSVPATAVRVSCSGCKKILQKGQTAYQRKGSTQLFCSTLCLTGYTVPPARPPPPLTKKTCSSCSKDILNPKDVISAQFENSTTSKDFCSQSCLSTYELKKKPIVTINTNSISTKCSMCQKNAVIRHEVNYQNVVHKLCSDACFSKFRSANNLTMNCCENCGGYCYSGSGQCHVLQIEGQSKKFCSSMCVTSYKQKSAKITPCALCKSLRSSAEMIENTNSLGKTELFCSVNCLSAYRVKMVTSAGVQVQCNSCKTSAIPQYHLAMSDGSIRNFCSYSCVVAFQNLFNKPTGMNSSVVPLSQGQVIVSIPTGSSASAGGGSTPAVSPTSINSSAAAGLQRLAAQSQHVGFARSVVKLRCQHCNRLFATKPELLDYKGKMFQFCGKNCCDEYKKINNVMAMCEYCKIEKIIKETVRFSGADKSFCSEGCKLLYKHDLGKRWGSHCKMCSYCLQTSPKLIQNNLGGKVEDFCCEECMSKYTVLFYQMAKCDGCKRQGKLSESLKWRGDIKHFCNLLCILMFCHQQTVCDPPLQNNAVASISMVQAASAGPPSLRKDSTPVIANVVSLASAPAAQPTANTNSVLQGAVPTVTAKIIGDASTQTDALKLPPSQPPRLLKNKALLCKPITQTKATSCKPHTQNKECQTDTPSEPQVMVVPVPVPVFVPIPLHLYTQYTPVPFGIPVPMPVPMFIPSSMDNDEKATEGIEDIKEKLATHPFEADLLEMAEMIAEDEEKEKTLSQGESQTSEQELFLDTKIFEKDQGSTYSGDLESEAVSTPHSWEEELNHYALKSNAVQDADSELKPFSKGETEQDLEADFPSESFDPLNKGQGIQARSRTRRRHRDGFPQPRRRGRKKSVVPVEPRSLIQGALQGCSVSGMTLKYMYGVNAWKNWVQWKNAKDEQGDLKCGGGELASASPCSDSLGSAQDHALSQESSEQGCKARSVKLKEDILSCTFSELSLGLCQFIQEVRRPNGEKYDPDSILYLCLGIQQYLFENGRIDNIFTEPYSRFMIELTKLLKIWEPTILPNGYMFSRIEEEHLWECKQLGAYSPIVLLNTLLFFNTKYFQLRNVTEHLKLSFAHVMRRTRTLKYSTKMTYLRFFPPLQKPESEPDKVTIGKRKRNEDDEAPVGVEMAENTDNPLRCPVRLYEFYLSKCSESVKQRSDVFYLQPERSCVPNSPMWYSTFPIDPGTLDTMLTRILMVREVHEELAKAKSEDSDAELSD</sequence>
<reference key="1">
    <citation type="journal article" date="2003" name="DNA Res.">
        <title>Prediction of the coding sequences of mouse homologues of KIAA gene: III. The complete nucleotide sequences of 500 mouse KIAA-homologous cDNAs identified by screening of terminal sequences of cDNA clones randomly sampled from size-fractionated libraries.</title>
        <authorList>
            <person name="Okazaki N."/>
            <person name="Kikuno R."/>
            <person name="Ohara R."/>
            <person name="Inamoto S."/>
            <person name="Koseki H."/>
            <person name="Hiraoka S."/>
            <person name="Saga Y."/>
            <person name="Nagase T."/>
            <person name="Ohara O."/>
            <person name="Koga H."/>
        </authorList>
    </citation>
    <scope>NUCLEOTIDE SEQUENCE [LARGE SCALE MRNA]</scope>
    <source>
        <tissue>Embryonic tail</tissue>
    </source>
</reference>
<reference key="2">
    <citation type="journal article" date="2009" name="PLoS Biol.">
        <title>Lineage-specific biology revealed by a finished genome assembly of the mouse.</title>
        <authorList>
            <person name="Church D.M."/>
            <person name="Goodstadt L."/>
            <person name="Hillier L.W."/>
            <person name="Zody M.C."/>
            <person name="Goldstein S."/>
            <person name="She X."/>
            <person name="Bult C.J."/>
            <person name="Agarwala R."/>
            <person name="Cherry J.L."/>
            <person name="DiCuccio M."/>
            <person name="Hlavina W."/>
            <person name="Kapustin Y."/>
            <person name="Meric P."/>
            <person name="Maglott D."/>
            <person name="Birtle Z."/>
            <person name="Marques A.C."/>
            <person name="Graves T."/>
            <person name="Zhou S."/>
            <person name="Teague B."/>
            <person name="Potamousis K."/>
            <person name="Churas C."/>
            <person name="Place M."/>
            <person name="Herschleb J."/>
            <person name="Runnheim R."/>
            <person name="Forrest D."/>
            <person name="Amos-Landgraf J."/>
            <person name="Schwartz D.C."/>
            <person name="Cheng Z."/>
            <person name="Lindblad-Toh K."/>
            <person name="Eichler E.E."/>
            <person name="Ponting C.P."/>
        </authorList>
    </citation>
    <scope>NUCLEOTIDE SEQUENCE [LARGE SCALE GENOMIC DNA]</scope>
    <source>
        <strain>C57BL/6J</strain>
    </source>
</reference>
<reference key="3">
    <citation type="journal article" date="2005" name="Science">
        <title>The transcriptional landscape of the mammalian genome.</title>
        <authorList>
            <person name="Carninci P."/>
            <person name="Kasukawa T."/>
            <person name="Katayama S."/>
            <person name="Gough J."/>
            <person name="Frith M.C."/>
            <person name="Maeda N."/>
            <person name="Oyama R."/>
            <person name="Ravasi T."/>
            <person name="Lenhard B."/>
            <person name="Wells C."/>
            <person name="Kodzius R."/>
            <person name="Shimokawa K."/>
            <person name="Bajic V.B."/>
            <person name="Brenner S.E."/>
            <person name="Batalov S."/>
            <person name="Forrest A.R."/>
            <person name="Zavolan M."/>
            <person name="Davis M.J."/>
            <person name="Wilming L.G."/>
            <person name="Aidinis V."/>
            <person name="Allen J.E."/>
            <person name="Ambesi-Impiombato A."/>
            <person name="Apweiler R."/>
            <person name="Aturaliya R.N."/>
            <person name="Bailey T.L."/>
            <person name="Bansal M."/>
            <person name="Baxter L."/>
            <person name="Beisel K.W."/>
            <person name="Bersano T."/>
            <person name="Bono H."/>
            <person name="Chalk A.M."/>
            <person name="Chiu K.P."/>
            <person name="Choudhary V."/>
            <person name="Christoffels A."/>
            <person name="Clutterbuck D.R."/>
            <person name="Crowe M.L."/>
            <person name="Dalla E."/>
            <person name="Dalrymple B.P."/>
            <person name="de Bono B."/>
            <person name="Della Gatta G."/>
            <person name="di Bernardo D."/>
            <person name="Down T."/>
            <person name="Engstrom P."/>
            <person name="Fagiolini M."/>
            <person name="Faulkner G."/>
            <person name="Fletcher C.F."/>
            <person name="Fukushima T."/>
            <person name="Furuno M."/>
            <person name="Futaki S."/>
            <person name="Gariboldi M."/>
            <person name="Georgii-Hemming P."/>
            <person name="Gingeras T.R."/>
            <person name="Gojobori T."/>
            <person name="Green R.E."/>
            <person name="Gustincich S."/>
            <person name="Harbers M."/>
            <person name="Hayashi Y."/>
            <person name="Hensch T.K."/>
            <person name="Hirokawa N."/>
            <person name="Hill D."/>
            <person name="Huminiecki L."/>
            <person name="Iacono M."/>
            <person name="Ikeo K."/>
            <person name="Iwama A."/>
            <person name="Ishikawa T."/>
            <person name="Jakt M."/>
            <person name="Kanapin A."/>
            <person name="Katoh M."/>
            <person name="Kawasawa Y."/>
            <person name="Kelso J."/>
            <person name="Kitamura H."/>
            <person name="Kitano H."/>
            <person name="Kollias G."/>
            <person name="Krishnan S.P."/>
            <person name="Kruger A."/>
            <person name="Kummerfeld S.K."/>
            <person name="Kurochkin I.V."/>
            <person name="Lareau L.F."/>
            <person name="Lazarevic D."/>
            <person name="Lipovich L."/>
            <person name="Liu J."/>
            <person name="Liuni S."/>
            <person name="McWilliam S."/>
            <person name="Madan Babu M."/>
            <person name="Madera M."/>
            <person name="Marchionni L."/>
            <person name="Matsuda H."/>
            <person name="Matsuzawa S."/>
            <person name="Miki H."/>
            <person name="Mignone F."/>
            <person name="Miyake S."/>
            <person name="Morris K."/>
            <person name="Mottagui-Tabar S."/>
            <person name="Mulder N."/>
            <person name="Nakano N."/>
            <person name="Nakauchi H."/>
            <person name="Ng P."/>
            <person name="Nilsson R."/>
            <person name="Nishiguchi S."/>
            <person name="Nishikawa S."/>
            <person name="Nori F."/>
            <person name="Ohara O."/>
            <person name="Okazaki Y."/>
            <person name="Orlando V."/>
            <person name="Pang K.C."/>
            <person name="Pavan W.J."/>
            <person name="Pavesi G."/>
            <person name="Pesole G."/>
            <person name="Petrovsky N."/>
            <person name="Piazza S."/>
            <person name="Reed J."/>
            <person name="Reid J.F."/>
            <person name="Ring B.Z."/>
            <person name="Ringwald M."/>
            <person name="Rost B."/>
            <person name="Ruan Y."/>
            <person name="Salzberg S.L."/>
            <person name="Sandelin A."/>
            <person name="Schneider C."/>
            <person name="Schoenbach C."/>
            <person name="Sekiguchi K."/>
            <person name="Semple C.A."/>
            <person name="Seno S."/>
            <person name="Sessa L."/>
            <person name="Sheng Y."/>
            <person name="Shibata Y."/>
            <person name="Shimada H."/>
            <person name="Shimada K."/>
            <person name="Silva D."/>
            <person name="Sinclair B."/>
            <person name="Sperling S."/>
            <person name="Stupka E."/>
            <person name="Sugiura K."/>
            <person name="Sultana R."/>
            <person name="Takenaka Y."/>
            <person name="Taki K."/>
            <person name="Tammoja K."/>
            <person name="Tan S.L."/>
            <person name="Tang S."/>
            <person name="Taylor M.S."/>
            <person name="Tegner J."/>
            <person name="Teichmann S.A."/>
            <person name="Ueda H.R."/>
            <person name="van Nimwegen E."/>
            <person name="Verardo R."/>
            <person name="Wei C.L."/>
            <person name="Yagi K."/>
            <person name="Yamanishi H."/>
            <person name="Zabarovsky E."/>
            <person name="Zhu S."/>
            <person name="Zimmer A."/>
            <person name="Hide W."/>
            <person name="Bult C."/>
            <person name="Grimmond S.M."/>
            <person name="Teasdale R.D."/>
            <person name="Liu E.T."/>
            <person name="Brusic V."/>
            <person name="Quackenbush J."/>
            <person name="Wahlestedt C."/>
            <person name="Mattick J.S."/>
            <person name="Hume D.A."/>
            <person name="Kai C."/>
            <person name="Sasaki D."/>
            <person name="Tomaru Y."/>
            <person name="Fukuda S."/>
            <person name="Kanamori-Katayama M."/>
            <person name="Suzuki M."/>
            <person name="Aoki J."/>
            <person name="Arakawa T."/>
            <person name="Iida J."/>
            <person name="Imamura K."/>
            <person name="Itoh M."/>
            <person name="Kato T."/>
            <person name="Kawaji H."/>
            <person name="Kawagashira N."/>
            <person name="Kawashima T."/>
            <person name="Kojima M."/>
            <person name="Kondo S."/>
            <person name="Konno H."/>
            <person name="Nakano K."/>
            <person name="Ninomiya N."/>
            <person name="Nishio T."/>
            <person name="Okada M."/>
            <person name="Plessy C."/>
            <person name="Shibata K."/>
            <person name="Shiraki T."/>
            <person name="Suzuki S."/>
            <person name="Tagami M."/>
            <person name="Waki K."/>
            <person name="Watahiki A."/>
            <person name="Okamura-Oho Y."/>
            <person name="Suzuki H."/>
            <person name="Kawai J."/>
            <person name="Hayashizaki Y."/>
        </authorList>
    </citation>
    <scope>NUCLEOTIDE SEQUENCE [LARGE SCALE MRNA] OF 1-218</scope>
    <source>
        <strain>C57BL/6J</strain>
    </source>
</reference>
<reference key="4">
    <citation type="journal article" date="2004" name="Genome Res.">
        <title>The status, quality, and expansion of the NIH full-length cDNA project: the Mammalian Gene Collection (MGC).</title>
        <authorList>
            <consortium name="The MGC Project Team"/>
        </authorList>
    </citation>
    <scope>NUCLEOTIDE SEQUENCE [LARGE SCALE MRNA] OF 253-1549 (ISOFORM 2)</scope>
    <source>
        <strain>C57BL/6J</strain>
        <tissue>Brain</tissue>
        <tissue>Eye</tissue>
    </source>
</reference>
<reference key="5">
    <citation type="journal article" date="2010" name="Cell">
        <title>A tissue-specific atlas of mouse protein phosphorylation and expression.</title>
        <authorList>
            <person name="Huttlin E.L."/>
            <person name="Jedrychowski M.P."/>
            <person name="Elias J.E."/>
            <person name="Goswami T."/>
            <person name="Rad R."/>
            <person name="Beausoleil S.A."/>
            <person name="Villen J."/>
            <person name="Haas W."/>
            <person name="Sowa M.E."/>
            <person name="Gygi S.P."/>
        </authorList>
    </citation>
    <scope>PHOSPHORYLATION [LARGE SCALE ANALYSIS] AT SER-121 AND SER-1548</scope>
    <scope>IDENTIFICATION BY MASS SPECTROMETRY [LARGE SCALE ANALYSIS]</scope>
    <source>
        <tissue>Brain</tissue>
        <tissue>Kidney</tissue>
        <tissue>Lung</tissue>
        <tissue>Spleen</tissue>
    </source>
</reference>
<dbReference type="EMBL" id="AK129137">
    <property type="protein sequence ID" value="BAC97947.1"/>
    <property type="status" value="ALT_INIT"/>
    <property type="molecule type" value="mRNA"/>
</dbReference>
<dbReference type="EMBL" id="AL606985">
    <property type="protein sequence ID" value="CAM15585.1"/>
    <property type="molecule type" value="Genomic_DNA"/>
</dbReference>
<dbReference type="EMBL" id="AL606908">
    <property type="protein sequence ID" value="CAM15585.1"/>
    <property type="status" value="JOINED"/>
    <property type="molecule type" value="Genomic_DNA"/>
</dbReference>
<dbReference type="EMBL" id="AL606908">
    <property type="protein sequence ID" value="CAM19271.1"/>
    <property type="molecule type" value="Genomic_DNA"/>
</dbReference>
<dbReference type="EMBL" id="AL606985">
    <property type="protein sequence ID" value="CAM19271.1"/>
    <property type="status" value="JOINED"/>
    <property type="molecule type" value="Genomic_DNA"/>
</dbReference>
<dbReference type="EMBL" id="AL606908">
    <property type="protein sequence ID" value="CAM19273.1"/>
    <property type="status" value="ALT_SEQ"/>
    <property type="molecule type" value="Genomic_DNA"/>
</dbReference>
<dbReference type="EMBL" id="AK148366">
    <property type="protein sequence ID" value="BAE28508.1"/>
    <property type="molecule type" value="mRNA"/>
</dbReference>
<dbReference type="EMBL" id="BC029670">
    <property type="protein sequence ID" value="AAH29670.1"/>
    <property type="molecule type" value="mRNA"/>
</dbReference>
<dbReference type="EMBL" id="BC050924">
    <property type="protein sequence ID" value="AAH50924.1"/>
    <property type="molecule type" value="mRNA"/>
</dbReference>
<dbReference type="CCDS" id="CCDS51303.1">
    <molecule id="A2A791-1"/>
</dbReference>
<dbReference type="RefSeq" id="NP_001107871.1">
    <molecule id="A2A791-1"/>
    <property type="nucleotide sequence ID" value="NM_001114399.2"/>
</dbReference>
<dbReference type="RefSeq" id="XP_006503407.1">
    <molecule id="A2A791-2"/>
    <property type="nucleotide sequence ID" value="XM_006503344.5"/>
</dbReference>
<dbReference type="SMR" id="A2A791"/>
<dbReference type="BioGRID" id="212440">
    <property type="interactions" value="14"/>
</dbReference>
<dbReference type="FunCoup" id="A2A791">
    <property type="interactions" value="5359"/>
</dbReference>
<dbReference type="IntAct" id="A2A791">
    <property type="interactions" value="2"/>
</dbReference>
<dbReference type="MINT" id="A2A791"/>
<dbReference type="STRING" id="10090.ENSMUSP00000101714"/>
<dbReference type="iPTMnet" id="A2A791"/>
<dbReference type="PhosphoSitePlus" id="A2A791"/>
<dbReference type="jPOST" id="A2A791"/>
<dbReference type="PaxDb" id="10090-ENSMUSP00000101714"/>
<dbReference type="PeptideAtlas" id="A2A791"/>
<dbReference type="ProteomicsDB" id="302067">
    <molecule id="A2A791-1"/>
</dbReference>
<dbReference type="ProteomicsDB" id="302068">
    <molecule id="A2A791-2"/>
</dbReference>
<dbReference type="Pumba" id="A2A791"/>
<dbReference type="Antibodypedia" id="31536">
    <property type="antibodies" value="115 antibodies from 28 providers"/>
</dbReference>
<dbReference type="Ensembl" id="ENSMUST00000106108.9">
    <molecule id="A2A791-1"/>
    <property type="protein sequence ID" value="ENSMUSP00000101714.3"/>
    <property type="gene ID" value="ENSMUSG00000042446.17"/>
</dbReference>
<dbReference type="GeneID" id="67785"/>
<dbReference type="KEGG" id="mmu:67785"/>
<dbReference type="UCSC" id="uc008uty.3">
    <molecule id="A2A791-1"/>
    <property type="organism name" value="mouse"/>
</dbReference>
<dbReference type="AGR" id="MGI:1915035"/>
<dbReference type="CTD" id="9202"/>
<dbReference type="MGI" id="MGI:1915035">
    <property type="gene designation" value="Zmym4"/>
</dbReference>
<dbReference type="VEuPathDB" id="HostDB:ENSMUSG00000042446"/>
<dbReference type="eggNOG" id="ENOG502QQQ9">
    <property type="taxonomic scope" value="Eukaryota"/>
</dbReference>
<dbReference type="GeneTree" id="ENSGT00940000159550"/>
<dbReference type="InParanoid" id="A2A791"/>
<dbReference type="OMA" id="XNQVEET"/>
<dbReference type="OrthoDB" id="10025028at2759"/>
<dbReference type="PhylomeDB" id="A2A791"/>
<dbReference type="TreeFam" id="TF336988"/>
<dbReference type="BioGRID-ORCS" id="67785">
    <property type="hits" value="4 hits in 79 CRISPR screens"/>
</dbReference>
<dbReference type="ChiTaRS" id="Zmym4">
    <property type="organism name" value="mouse"/>
</dbReference>
<dbReference type="PRO" id="PR:A2A791"/>
<dbReference type="Proteomes" id="UP000000589">
    <property type="component" value="Chromosome 4"/>
</dbReference>
<dbReference type="RNAct" id="A2A791">
    <property type="molecule type" value="protein"/>
</dbReference>
<dbReference type="Bgee" id="ENSMUSG00000042446">
    <property type="expression patterns" value="Expressed in undifferentiated genital tubercle and 260 other cell types or tissues"/>
</dbReference>
<dbReference type="ExpressionAtlas" id="A2A791">
    <property type="expression patterns" value="baseline and differential"/>
</dbReference>
<dbReference type="GO" id="GO:0008270">
    <property type="term" value="F:zinc ion binding"/>
    <property type="evidence" value="ECO:0007669"/>
    <property type="project" value="UniProtKB-KW"/>
</dbReference>
<dbReference type="GO" id="GO:0007010">
    <property type="term" value="P:cytoskeleton organization"/>
    <property type="evidence" value="ECO:0000250"/>
    <property type="project" value="UniProtKB"/>
</dbReference>
<dbReference type="GO" id="GO:0022604">
    <property type="term" value="P:regulation of cell morphogenesis"/>
    <property type="evidence" value="ECO:0000250"/>
    <property type="project" value="UniProtKB"/>
</dbReference>
<dbReference type="InterPro" id="IPR021893">
    <property type="entry name" value="DUF3504"/>
</dbReference>
<dbReference type="InterPro" id="IPR011017">
    <property type="entry name" value="TRASH_dom"/>
</dbReference>
<dbReference type="InterPro" id="IPR010507">
    <property type="entry name" value="Znf_MYM"/>
</dbReference>
<dbReference type="InterPro" id="IPR051284">
    <property type="entry name" value="ZnF_MYMT-QRICH1"/>
</dbReference>
<dbReference type="PANTHER" id="PTHR45736">
    <property type="entry name" value="ZINC FINGER MYM-TYPE PROTEIN"/>
    <property type="match status" value="1"/>
</dbReference>
<dbReference type="PANTHER" id="PTHR45736:SF5">
    <property type="entry name" value="ZINC FINGER MYM-TYPE PROTEIN 4"/>
    <property type="match status" value="1"/>
</dbReference>
<dbReference type="Pfam" id="PF12012">
    <property type="entry name" value="DUF3504"/>
    <property type="match status" value="1"/>
</dbReference>
<dbReference type="Pfam" id="PF24900">
    <property type="entry name" value="TRASH_ZMYM4"/>
    <property type="match status" value="1"/>
</dbReference>
<dbReference type="Pfam" id="PF06467">
    <property type="entry name" value="zf-FCS"/>
    <property type="match status" value="7"/>
</dbReference>
<dbReference type="SMART" id="SM00746">
    <property type="entry name" value="TRASH"/>
    <property type="match status" value="10"/>
</dbReference>
<dbReference type="SUPFAM" id="SSF57716">
    <property type="entry name" value="Glucocorticoid receptor-like (DNA-binding domain)"/>
    <property type="match status" value="1"/>
</dbReference>
<keyword id="KW-0007">Acetylation</keyword>
<keyword id="KW-0025">Alternative splicing</keyword>
<keyword id="KW-1017">Isopeptide bond</keyword>
<keyword id="KW-0479">Metal-binding</keyword>
<keyword id="KW-0597">Phosphoprotein</keyword>
<keyword id="KW-1185">Reference proteome</keyword>
<keyword id="KW-0677">Repeat</keyword>
<keyword id="KW-0832">Ubl conjugation</keyword>
<keyword id="KW-0862">Zinc</keyword>
<keyword id="KW-0863">Zinc-finger</keyword>
<gene>
    <name type="primary">Zmym4</name>
    <name type="synonym">Kiaa0425</name>
    <name type="synonym">Zfp262</name>
    <name type="synonym">Znf262</name>
</gene>
<evidence type="ECO:0000250" key="1"/>
<evidence type="ECO:0000250" key="2">
    <source>
        <dbReference type="UniProtKB" id="Q5VZL5"/>
    </source>
</evidence>
<evidence type="ECO:0000256" key="3">
    <source>
        <dbReference type="SAM" id="MobiDB-lite"/>
    </source>
</evidence>
<evidence type="ECO:0000303" key="4">
    <source>
    </source>
</evidence>
<evidence type="ECO:0000305" key="5"/>
<evidence type="ECO:0007744" key="6">
    <source>
    </source>
</evidence>
<comment type="function">
    <text evidence="1">Plays a role in the regulation of cell morphology and cytoskeletal organization.</text>
</comment>
<comment type="alternative products">
    <event type="alternative splicing"/>
    <isoform>
        <id>A2A791-1</id>
        <name>1</name>
        <sequence type="displayed"/>
    </isoform>
    <isoform>
        <id>A2A791-2</id>
        <name>2</name>
        <sequence type="described" ref="VSP_027515"/>
    </isoform>
</comment>
<comment type="sequence caution" evidence="5">
    <conflict type="erroneous initiation">
        <sequence resource="EMBL-CDS" id="BAC97947"/>
    </conflict>
</comment>
<comment type="sequence caution" evidence="5">
    <conflict type="erroneous gene model prediction">
        <sequence resource="EMBL-CDS" id="CAM19273"/>
    </conflict>
</comment>
<name>ZMYM4_MOUSE</name>
<organism>
    <name type="scientific">Mus musculus</name>
    <name type="common">Mouse</name>
    <dbReference type="NCBI Taxonomy" id="10090"/>
    <lineage>
        <taxon>Eukaryota</taxon>
        <taxon>Metazoa</taxon>
        <taxon>Chordata</taxon>
        <taxon>Craniata</taxon>
        <taxon>Vertebrata</taxon>
        <taxon>Euteleostomi</taxon>
        <taxon>Mammalia</taxon>
        <taxon>Eutheria</taxon>
        <taxon>Euarchontoglires</taxon>
        <taxon>Glires</taxon>
        <taxon>Rodentia</taxon>
        <taxon>Myomorpha</taxon>
        <taxon>Muroidea</taxon>
        <taxon>Muridae</taxon>
        <taxon>Murinae</taxon>
        <taxon>Mus</taxon>
        <taxon>Mus</taxon>
    </lineage>
</organism>
<feature type="initiator methionine" description="Removed" evidence="2">
    <location>
        <position position="1"/>
    </location>
</feature>
<feature type="chain" id="PRO_0000299018" description="Zinc finger MYM-type protein 4">
    <location>
        <begin position="2"/>
        <end position="1549"/>
    </location>
</feature>
<feature type="zinc finger region" description="MYM-type 1">
    <location>
        <begin position="362"/>
        <end position="402"/>
    </location>
</feature>
<feature type="zinc finger region" description="MYM-type 2">
    <location>
        <begin position="414"/>
        <end position="457"/>
    </location>
</feature>
<feature type="zinc finger region" description="MYM-type 3">
    <location>
        <begin position="464"/>
        <end position="499"/>
    </location>
</feature>
<feature type="zinc finger region" description="MYM-type 4">
    <location>
        <begin position="510"/>
        <end position="544"/>
    </location>
</feature>
<feature type="zinc finger region" description="MYM-type 5">
    <location>
        <begin position="554"/>
        <end position="592"/>
    </location>
</feature>
<feature type="zinc finger region" description="MYM-type 6">
    <location>
        <begin position="600"/>
        <end position="631"/>
    </location>
</feature>
<feature type="zinc finger region" description="MYM-type 7">
    <location>
        <begin position="708"/>
        <end position="742"/>
    </location>
</feature>
<feature type="zinc finger region" description="MYM-type 8">
    <location>
        <begin position="749"/>
        <end position="788"/>
    </location>
</feature>
<feature type="zinc finger region" description="MYM-type 9">
    <location>
        <begin position="795"/>
        <end position="829"/>
    </location>
</feature>
<feature type="region of interest" description="Disordered" evidence="3">
    <location>
        <begin position="83"/>
        <end position="108"/>
    </location>
</feature>
<feature type="region of interest" description="Disordered" evidence="3">
    <location>
        <begin position="267"/>
        <end position="291"/>
    </location>
</feature>
<feature type="region of interest" description="Disordered" evidence="3">
    <location>
        <begin position="1124"/>
        <end position="1185"/>
    </location>
</feature>
<feature type="compositionally biased region" description="Polar residues" evidence="3">
    <location>
        <begin position="97"/>
        <end position="106"/>
    </location>
</feature>
<feature type="compositionally biased region" description="Polar residues" evidence="3">
    <location>
        <begin position="280"/>
        <end position="290"/>
    </location>
</feature>
<feature type="compositionally biased region" description="Basic and acidic residues" evidence="3">
    <location>
        <begin position="1125"/>
        <end position="1135"/>
    </location>
</feature>
<feature type="compositionally biased region" description="Basic residues" evidence="3">
    <location>
        <begin position="1161"/>
        <end position="1182"/>
    </location>
</feature>
<feature type="modified residue" description="N-acetylalanine" evidence="2">
    <location>
        <position position="2"/>
    </location>
</feature>
<feature type="modified residue" description="Phosphothreonine" evidence="2">
    <location>
        <position position="106"/>
    </location>
</feature>
<feature type="modified residue" description="Phosphoserine" evidence="2">
    <location>
        <position position="109"/>
    </location>
</feature>
<feature type="modified residue" description="Phosphoserine" evidence="6">
    <location>
        <position position="121"/>
    </location>
</feature>
<feature type="modified residue" description="Phosphoserine" evidence="2">
    <location>
        <position position="161"/>
    </location>
</feature>
<feature type="modified residue" description="Phosphoserine" evidence="2">
    <location>
        <position position="197"/>
    </location>
</feature>
<feature type="modified residue" description="Phosphoserine" evidence="2">
    <location>
        <position position="242"/>
    </location>
</feature>
<feature type="modified residue" description="Phosphoserine" evidence="2">
    <location>
        <position position="1065"/>
    </location>
</feature>
<feature type="modified residue" description="Phosphoserine" evidence="2">
    <location>
        <position position="1072"/>
    </location>
</feature>
<feature type="modified residue" description="Phosphoserine" evidence="2">
    <location>
        <position position="1182"/>
    </location>
</feature>
<feature type="modified residue" description="Phosphoserine" evidence="2">
    <location>
        <position position="1257"/>
    </location>
</feature>
<feature type="modified residue" description="Phosphoserine" evidence="2">
    <location>
        <position position="1540"/>
    </location>
</feature>
<feature type="modified residue" description="Phosphoserine" evidence="2">
    <location>
        <position position="1543"/>
    </location>
</feature>
<feature type="modified residue" description="Phosphoserine" evidence="6">
    <location>
        <position position="1548"/>
    </location>
</feature>
<feature type="cross-link" description="Glycyl lysine isopeptide (Lys-Gly) (interchain with G-Cter in SUMO2)" evidence="2">
    <location>
        <position position="139"/>
    </location>
</feature>
<feature type="cross-link" description="Glycyl lysine isopeptide (Lys-Gly) (interchain with G-Cter in SUMO2)" evidence="2">
    <location>
        <position position="148"/>
    </location>
</feature>
<feature type="cross-link" description="Glycyl lysine isopeptide (Lys-Gly) (interchain with G-Cter in SUMO2)" evidence="2">
    <location>
        <position position="195"/>
    </location>
</feature>
<feature type="cross-link" description="Glycyl lysine isopeptide (Lys-Gly) (interchain with G-Cter in SUMO2)" evidence="2">
    <location>
        <position position="201"/>
    </location>
</feature>
<feature type="cross-link" description="Glycyl lysine isopeptide (Lys-Gly) (interchain with G-Cter in SUMO2)" evidence="2">
    <location>
        <position position="232"/>
    </location>
</feature>
<feature type="cross-link" description="Glycyl lysine isopeptide (Lys-Gly) (interchain with G-Cter in SUMO1); alternate" evidence="2">
    <location>
        <position position="250"/>
    </location>
</feature>
<feature type="cross-link" description="Glycyl lysine isopeptide (Lys-Gly) (interchain with G-Cter in SUMO2); alternate" evidence="2">
    <location>
        <position position="250"/>
    </location>
</feature>
<feature type="cross-link" description="Glycyl lysine isopeptide (Lys-Gly) (interchain with G-Cter in SUMO2)" evidence="2">
    <location>
        <position position="273"/>
    </location>
</feature>
<feature type="cross-link" description="Glycyl lysine isopeptide (Lys-Gly) (interchain with G-Cter in SUMO2)" evidence="2">
    <location>
        <position position="289"/>
    </location>
</feature>
<feature type="cross-link" description="Glycyl lysine isopeptide (Lys-Gly) (interchain with G-Cter in SUMO2)" evidence="2">
    <location>
        <position position="327"/>
    </location>
</feature>
<feature type="cross-link" description="Glycyl lysine isopeptide (Lys-Gly) (interchain with G-Cter in SUMO2)" evidence="2">
    <location>
        <position position="400"/>
    </location>
</feature>
<feature type="cross-link" description="Glycyl lysine isopeptide (Lys-Gly) (interchain with G-Cter in SUMO2)" evidence="2">
    <location>
        <position position="428"/>
    </location>
</feature>
<feature type="cross-link" description="Glycyl lysine isopeptide (Lys-Gly) (interchain with G-Cter in SUMO2)" evidence="2">
    <location>
        <position position="430"/>
    </location>
</feature>
<feature type="cross-link" description="Glycyl lysine isopeptide (Lys-Gly) (interchain with G-Cter in SUMO2)" evidence="2">
    <location>
        <position position="1035"/>
    </location>
</feature>
<feature type="cross-link" description="Glycyl lysine isopeptide (Lys-Gly) (interchain with G-Cter in SUMO2)" evidence="2">
    <location>
        <position position="1062"/>
    </location>
</feature>
<feature type="cross-link" description="Glycyl lysine isopeptide (Lys-Gly) (interchain with G-Cter in SUMO2)" evidence="2">
    <location>
        <position position="1081"/>
    </location>
</feature>
<feature type="cross-link" description="Glycyl lysine isopeptide (Lys-Gly) (interchain with G-Cter in SUMO2)" evidence="2">
    <location>
        <position position="1128"/>
    </location>
</feature>
<feature type="cross-link" description="Glycyl lysine isopeptide (Lys-Gly) (interchain with G-Cter in SUMO2)" evidence="2">
    <location>
        <position position="1432"/>
    </location>
</feature>
<feature type="splice variant" id="VSP_027515" description="In isoform 2." evidence="4">
    <location>
        <begin position="524"/>
        <end position="612"/>
    </location>
</feature>
<feature type="sequence conflict" description="In Ref. 1; BAC97947." evidence="5" ref="1">
    <original>M</original>
    <variation>V</variation>
    <location>
        <position position="1357"/>
    </location>
</feature>
<proteinExistence type="evidence at protein level"/>
<protein>
    <recommendedName>
        <fullName>Zinc finger MYM-type protein 4</fullName>
    </recommendedName>
    <alternativeName>
        <fullName>Zinc finger protein 262</fullName>
    </alternativeName>
</protein>